<sequence>MSKEKIIGIDLGTTNSCVAVMEGGDPVVIQNSEGARTTPSIVAFTAKGETIVGQFAKNQAITNAVNTIRSAKRFIGRRFNEAGDESKMVSYKVIRAGNDGVKFETVSGEFTPQEIAARVLQKMKKTAEDFLGHEVKKAVVTVPAYFNDEQRQATKDAGRIAGLEVERIINEPTAAALAYGFDKKKTNAKIAVYDLGGGTFDVSILELGDGVFEVKSTNGDTHLGGDDFDNVVMQWMIDEFKKQTGIDISGDKNTVQRLKEAAEKAKIELSGTSSTQINLPFITADASGPKHLDMTLTKAKFDEITRSLVERTRIPCINALKDAGLSASEIDEVILVGGSIRIPAVQALVKEIFGKEPNKSVNPDEVVAVGAAIQGGVLAGDVTDVLLLDVTPLSLGIETLGGVMTKLIERNTTIPTRKSQVFSTAADNQTTVSVHVLQGEREMASANRTLGRFDLVGIPSAPRGVPQIEVTFDIDANGIVHVSAKDLGTGKEQKIRIESSSGLSEEEIKKMVKDAEAHAEEDKKLREAADTKNELEAIVYQLEKTIGESADKLDESEKQRAQDEIKRGREAMESGDLERMKASRDSIQQVAMQIGQKIYSQAGPEQGAPGAEAGAGASQGASGTDANGEKVVDADYTVVDEDKK</sequence>
<name>DNAK_LEPBA</name>
<gene>
    <name evidence="1" type="primary">dnaK</name>
    <name type="ordered locus">LBF_3265</name>
</gene>
<keyword id="KW-0067">ATP-binding</keyword>
<keyword id="KW-0143">Chaperone</keyword>
<keyword id="KW-0547">Nucleotide-binding</keyword>
<keyword id="KW-0597">Phosphoprotein</keyword>
<keyword id="KW-0346">Stress response</keyword>
<accession>B0SHT1</accession>
<dbReference type="EMBL" id="CP000777">
    <property type="protein sequence ID" value="ABZ95732.1"/>
    <property type="molecule type" value="Genomic_DNA"/>
</dbReference>
<dbReference type="RefSeq" id="WP_012390299.1">
    <property type="nucleotide sequence ID" value="NC_010842.1"/>
</dbReference>
<dbReference type="SMR" id="B0SHT1"/>
<dbReference type="KEGG" id="lbf:LBF_3265"/>
<dbReference type="HOGENOM" id="CLU_005965_2_4_12"/>
<dbReference type="GO" id="GO:0005524">
    <property type="term" value="F:ATP binding"/>
    <property type="evidence" value="ECO:0007669"/>
    <property type="project" value="UniProtKB-UniRule"/>
</dbReference>
<dbReference type="GO" id="GO:0140662">
    <property type="term" value="F:ATP-dependent protein folding chaperone"/>
    <property type="evidence" value="ECO:0007669"/>
    <property type="project" value="InterPro"/>
</dbReference>
<dbReference type="GO" id="GO:0051082">
    <property type="term" value="F:unfolded protein binding"/>
    <property type="evidence" value="ECO:0007669"/>
    <property type="project" value="InterPro"/>
</dbReference>
<dbReference type="CDD" id="cd10234">
    <property type="entry name" value="ASKHA_NBD_HSP70_DnaK-like"/>
    <property type="match status" value="1"/>
</dbReference>
<dbReference type="FunFam" id="2.60.34.10:FF:000014">
    <property type="entry name" value="Chaperone protein DnaK HSP70"/>
    <property type="match status" value="1"/>
</dbReference>
<dbReference type="FunFam" id="3.30.420.40:FF:000020">
    <property type="entry name" value="Chaperone protein HscA homolog"/>
    <property type="match status" value="1"/>
</dbReference>
<dbReference type="FunFam" id="1.20.1270.10:FF:000001">
    <property type="entry name" value="Molecular chaperone DnaK"/>
    <property type="match status" value="1"/>
</dbReference>
<dbReference type="FunFam" id="3.30.420.40:FF:000004">
    <property type="entry name" value="Molecular chaperone DnaK"/>
    <property type="match status" value="1"/>
</dbReference>
<dbReference type="FunFam" id="3.90.640.10:FF:000003">
    <property type="entry name" value="Molecular chaperone DnaK"/>
    <property type="match status" value="1"/>
</dbReference>
<dbReference type="Gene3D" id="1.20.1270.10">
    <property type="match status" value="1"/>
</dbReference>
<dbReference type="Gene3D" id="3.30.420.40">
    <property type="match status" value="2"/>
</dbReference>
<dbReference type="Gene3D" id="3.90.640.10">
    <property type="entry name" value="Actin, Chain A, domain 4"/>
    <property type="match status" value="1"/>
</dbReference>
<dbReference type="Gene3D" id="2.60.34.10">
    <property type="entry name" value="Substrate Binding Domain Of DNAk, Chain A, domain 1"/>
    <property type="match status" value="1"/>
</dbReference>
<dbReference type="HAMAP" id="MF_00332">
    <property type="entry name" value="DnaK"/>
    <property type="match status" value="1"/>
</dbReference>
<dbReference type="InterPro" id="IPR043129">
    <property type="entry name" value="ATPase_NBD"/>
</dbReference>
<dbReference type="InterPro" id="IPR012725">
    <property type="entry name" value="Chaperone_DnaK"/>
</dbReference>
<dbReference type="InterPro" id="IPR018181">
    <property type="entry name" value="Heat_shock_70_CS"/>
</dbReference>
<dbReference type="InterPro" id="IPR029048">
    <property type="entry name" value="HSP70_C_sf"/>
</dbReference>
<dbReference type="InterPro" id="IPR029047">
    <property type="entry name" value="HSP70_peptide-bd_sf"/>
</dbReference>
<dbReference type="InterPro" id="IPR013126">
    <property type="entry name" value="Hsp_70_fam"/>
</dbReference>
<dbReference type="NCBIfam" id="NF001413">
    <property type="entry name" value="PRK00290.1"/>
    <property type="match status" value="1"/>
</dbReference>
<dbReference type="NCBIfam" id="NF003520">
    <property type="entry name" value="PRK05183.1"/>
    <property type="match status" value="1"/>
</dbReference>
<dbReference type="NCBIfam" id="TIGR02350">
    <property type="entry name" value="prok_dnaK"/>
    <property type="match status" value="1"/>
</dbReference>
<dbReference type="PANTHER" id="PTHR19375">
    <property type="entry name" value="HEAT SHOCK PROTEIN 70KDA"/>
    <property type="match status" value="1"/>
</dbReference>
<dbReference type="Pfam" id="PF00012">
    <property type="entry name" value="HSP70"/>
    <property type="match status" value="1"/>
</dbReference>
<dbReference type="PRINTS" id="PR00301">
    <property type="entry name" value="HEATSHOCK70"/>
</dbReference>
<dbReference type="SUPFAM" id="SSF53067">
    <property type="entry name" value="Actin-like ATPase domain"/>
    <property type="match status" value="2"/>
</dbReference>
<dbReference type="SUPFAM" id="SSF100934">
    <property type="entry name" value="Heat shock protein 70kD (HSP70), C-terminal subdomain"/>
    <property type="match status" value="1"/>
</dbReference>
<dbReference type="SUPFAM" id="SSF100920">
    <property type="entry name" value="Heat shock protein 70kD (HSP70), peptide-binding domain"/>
    <property type="match status" value="1"/>
</dbReference>
<dbReference type="PROSITE" id="PS00297">
    <property type="entry name" value="HSP70_1"/>
    <property type="match status" value="1"/>
</dbReference>
<dbReference type="PROSITE" id="PS00329">
    <property type="entry name" value="HSP70_2"/>
    <property type="match status" value="1"/>
</dbReference>
<reference key="1">
    <citation type="journal article" date="2008" name="PLoS ONE">
        <title>Genome sequence of the saprophyte Leptospira biflexa provides insights into the evolution of Leptospira and the pathogenesis of leptospirosis.</title>
        <authorList>
            <person name="Picardeau M."/>
            <person name="Bulach D.M."/>
            <person name="Bouchier C."/>
            <person name="Zuerner R.L."/>
            <person name="Zidane N."/>
            <person name="Wilson P.J."/>
            <person name="Creno S."/>
            <person name="Kuczek E.S."/>
            <person name="Bommezzadri S."/>
            <person name="Davis J.C."/>
            <person name="McGrath A."/>
            <person name="Johnson M.J."/>
            <person name="Boursaux-Eude C."/>
            <person name="Seemann T."/>
            <person name="Rouy Z."/>
            <person name="Coppel R.L."/>
            <person name="Rood J.I."/>
            <person name="Lajus A."/>
            <person name="Davies J.K."/>
            <person name="Medigue C."/>
            <person name="Adler B."/>
        </authorList>
    </citation>
    <scope>NUCLEOTIDE SEQUENCE [LARGE SCALE GENOMIC DNA]</scope>
    <source>
        <strain>Patoc 1 / Ames</strain>
    </source>
</reference>
<organism>
    <name type="scientific">Leptospira biflexa serovar Patoc (strain Patoc 1 / Ames)</name>
    <dbReference type="NCBI Taxonomy" id="355278"/>
    <lineage>
        <taxon>Bacteria</taxon>
        <taxon>Pseudomonadati</taxon>
        <taxon>Spirochaetota</taxon>
        <taxon>Spirochaetia</taxon>
        <taxon>Leptospirales</taxon>
        <taxon>Leptospiraceae</taxon>
        <taxon>Leptospira</taxon>
    </lineage>
</organism>
<proteinExistence type="inferred from homology"/>
<feature type="chain" id="PRO_1000119720" description="Chaperone protein DnaK">
    <location>
        <begin position="1"/>
        <end position="644"/>
    </location>
</feature>
<feature type="region of interest" description="Disordered" evidence="2">
    <location>
        <begin position="550"/>
        <end position="586"/>
    </location>
</feature>
<feature type="region of interest" description="Disordered" evidence="2">
    <location>
        <begin position="599"/>
        <end position="644"/>
    </location>
</feature>
<feature type="compositionally biased region" description="Basic and acidic residues" evidence="2">
    <location>
        <begin position="550"/>
        <end position="584"/>
    </location>
</feature>
<feature type="compositionally biased region" description="Low complexity" evidence="2">
    <location>
        <begin position="600"/>
        <end position="623"/>
    </location>
</feature>
<feature type="modified residue" description="Phosphothreonine; by autocatalysis" evidence="1">
    <location>
        <position position="199"/>
    </location>
</feature>
<comment type="function">
    <text evidence="1">Acts as a chaperone.</text>
</comment>
<comment type="induction">
    <text evidence="1">By stress conditions e.g. heat shock.</text>
</comment>
<comment type="similarity">
    <text evidence="1">Belongs to the heat shock protein 70 family.</text>
</comment>
<evidence type="ECO:0000255" key="1">
    <source>
        <dbReference type="HAMAP-Rule" id="MF_00332"/>
    </source>
</evidence>
<evidence type="ECO:0000256" key="2">
    <source>
        <dbReference type="SAM" id="MobiDB-lite"/>
    </source>
</evidence>
<protein>
    <recommendedName>
        <fullName evidence="1">Chaperone protein DnaK</fullName>
    </recommendedName>
    <alternativeName>
        <fullName evidence="1">HSP70</fullName>
    </alternativeName>
    <alternativeName>
        <fullName evidence="1">Heat shock 70 kDa protein</fullName>
    </alternativeName>
    <alternativeName>
        <fullName evidence="1">Heat shock protein 70</fullName>
    </alternativeName>
</protein>